<proteinExistence type="evidence at protein level"/>
<reference key="1">
    <citation type="journal article" date="1989" name="Cell">
        <title>The murine interleukin-4 receptor: molecular cloning and characterization of secreted and membrane bound forms.</title>
        <authorList>
            <person name="Mosley B."/>
            <person name="Beckmann M.P."/>
            <person name="March C.J."/>
            <person name="Idzerda R.L."/>
            <person name="Gimpel S.D."/>
            <person name="VandenBos T."/>
            <person name="Friend D."/>
            <person name="Alpert A."/>
            <person name="Anderson D."/>
            <person name="Jackson J."/>
            <person name="Wignall J.M."/>
            <person name="Smith C."/>
            <person name="Gallis B."/>
            <person name="Sims J.E."/>
            <person name="Urdal D."/>
            <person name="Widmer M.B."/>
            <person name="Cosman D."/>
            <person name="Park L.S."/>
        </authorList>
    </citation>
    <scope>NUCLEOTIDE SEQUENCE [MRNA] (ISOFORMS 1; 2 AND 3)</scope>
    <scope>PROTEIN SEQUENCE OF 26-39; 162-179 AND 194-210</scope>
    <source>
        <strain>C57BL/6J</strain>
        <tissue>T-cell</tissue>
    </source>
</reference>
<reference key="2">
    <citation type="journal article" date="1990" name="Proc. Natl. Acad. Sci. U.S.A.">
        <title>Expression cloning of a cDNA encoding the murine interleukin 4 receptor based on ligand binding.</title>
        <authorList>
            <person name="Harada N."/>
            <person name="Castle B.E."/>
            <person name="Gorman D.M."/>
            <person name="Itoh N."/>
            <person name="Schreurs J."/>
            <person name="Barrett R.L."/>
            <person name="Howard M."/>
            <person name="Miyajima A."/>
        </authorList>
    </citation>
    <scope>NUCLEOTIDE SEQUENCE [MRNA] (ISOFORM 1)</scope>
    <source>
        <strain>C57BL/6J</strain>
        <tissue>Mast cell</tissue>
    </source>
</reference>
<reference key="3">
    <citation type="journal article" date="1992" name="Growth Factors">
        <title>The murine interleukin-4 receptor gene: genomic structure, expression and potential for alternative splicing.</title>
        <authorList>
            <person name="Wrighton N."/>
            <person name="Campbell L.A."/>
            <person name="Harada N."/>
            <person name="Miyajima A."/>
            <person name="Lee F."/>
        </authorList>
    </citation>
    <scope>NUCLEOTIDE SEQUENCE [GENOMIC DNA] (ISOFORM 1)</scope>
    <source>
        <strain>BALB/cJ</strain>
        <tissue>Sperm</tissue>
    </source>
</reference>
<reference key="4">
    <citation type="journal article" date="1997" name="J. Exp. Med.">
        <title>Molecular characterization and functional analysis of murine interleukin 4 receptor allotypes.</title>
        <authorList>
            <person name="Schulte T."/>
            <person name="Kurrle R."/>
            <person name="Roellinghoff M."/>
            <person name="Gessner A."/>
        </authorList>
    </citation>
    <scope>NUCLEOTIDE SEQUENCE [MRNA] (ISOFORM 1)</scope>
    <scope>CHARACTERIZATION OF VARIANT ILE-74</scope>
    <source>
        <strain>AKR/J</strain>
        <strain>BALB/cJ</strain>
        <strain>C3H/HeN</strain>
        <strain>C57BL/6J</strain>
        <strain>CB-17/SCID</strain>
        <strain>CBA/J</strain>
        <strain>DBA/2J</strain>
        <strain>FVB/N</strain>
        <strain>SJL/J</strain>
    </source>
</reference>
<reference key="5">
    <citation type="journal article" date="2005" name="Science">
        <title>The transcriptional landscape of the mammalian genome.</title>
        <authorList>
            <person name="Carninci P."/>
            <person name="Kasukawa T."/>
            <person name="Katayama S."/>
            <person name="Gough J."/>
            <person name="Frith M.C."/>
            <person name="Maeda N."/>
            <person name="Oyama R."/>
            <person name="Ravasi T."/>
            <person name="Lenhard B."/>
            <person name="Wells C."/>
            <person name="Kodzius R."/>
            <person name="Shimokawa K."/>
            <person name="Bajic V.B."/>
            <person name="Brenner S.E."/>
            <person name="Batalov S."/>
            <person name="Forrest A.R."/>
            <person name="Zavolan M."/>
            <person name="Davis M.J."/>
            <person name="Wilming L.G."/>
            <person name="Aidinis V."/>
            <person name="Allen J.E."/>
            <person name="Ambesi-Impiombato A."/>
            <person name="Apweiler R."/>
            <person name="Aturaliya R.N."/>
            <person name="Bailey T.L."/>
            <person name="Bansal M."/>
            <person name="Baxter L."/>
            <person name="Beisel K.W."/>
            <person name="Bersano T."/>
            <person name="Bono H."/>
            <person name="Chalk A.M."/>
            <person name="Chiu K.P."/>
            <person name="Choudhary V."/>
            <person name="Christoffels A."/>
            <person name="Clutterbuck D.R."/>
            <person name="Crowe M.L."/>
            <person name="Dalla E."/>
            <person name="Dalrymple B.P."/>
            <person name="de Bono B."/>
            <person name="Della Gatta G."/>
            <person name="di Bernardo D."/>
            <person name="Down T."/>
            <person name="Engstrom P."/>
            <person name="Fagiolini M."/>
            <person name="Faulkner G."/>
            <person name="Fletcher C.F."/>
            <person name="Fukushima T."/>
            <person name="Furuno M."/>
            <person name="Futaki S."/>
            <person name="Gariboldi M."/>
            <person name="Georgii-Hemming P."/>
            <person name="Gingeras T.R."/>
            <person name="Gojobori T."/>
            <person name="Green R.E."/>
            <person name="Gustincich S."/>
            <person name="Harbers M."/>
            <person name="Hayashi Y."/>
            <person name="Hensch T.K."/>
            <person name="Hirokawa N."/>
            <person name="Hill D."/>
            <person name="Huminiecki L."/>
            <person name="Iacono M."/>
            <person name="Ikeo K."/>
            <person name="Iwama A."/>
            <person name="Ishikawa T."/>
            <person name="Jakt M."/>
            <person name="Kanapin A."/>
            <person name="Katoh M."/>
            <person name="Kawasawa Y."/>
            <person name="Kelso J."/>
            <person name="Kitamura H."/>
            <person name="Kitano H."/>
            <person name="Kollias G."/>
            <person name="Krishnan S.P."/>
            <person name="Kruger A."/>
            <person name="Kummerfeld S.K."/>
            <person name="Kurochkin I.V."/>
            <person name="Lareau L.F."/>
            <person name="Lazarevic D."/>
            <person name="Lipovich L."/>
            <person name="Liu J."/>
            <person name="Liuni S."/>
            <person name="McWilliam S."/>
            <person name="Madan Babu M."/>
            <person name="Madera M."/>
            <person name="Marchionni L."/>
            <person name="Matsuda H."/>
            <person name="Matsuzawa S."/>
            <person name="Miki H."/>
            <person name="Mignone F."/>
            <person name="Miyake S."/>
            <person name="Morris K."/>
            <person name="Mottagui-Tabar S."/>
            <person name="Mulder N."/>
            <person name="Nakano N."/>
            <person name="Nakauchi H."/>
            <person name="Ng P."/>
            <person name="Nilsson R."/>
            <person name="Nishiguchi S."/>
            <person name="Nishikawa S."/>
            <person name="Nori F."/>
            <person name="Ohara O."/>
            <person name="Okazaki Y."/>
            <person name="Orlando V."/>
            <person name="Pang K.C."/>
            <person name="Pavan W.J."/>
            <person name="Pavesi G."/>
            <person name="Pesole G."/>
            <person name="Petrovsky N."/>
            <person name="Piazza S."/>
            <person name="Reed J."/>
            <person name="Reid J.F."/>
            <person name="Ring B.Z."/>
            <person name="Ringwald M."/>
            <person name="Rost B."/>
            <person name="Ruan Y."/>
            <person name="Salzberg S.L."/>
            <person name="Sandelin A."/>
            <person name="Schneider C."/>
            <person name="Schoenbach C."/>
            <person name="Sekiguchi K."/>
            <person name="Semple C.A."/>
            <person name="Seno S."/>
            <person name="Sessa L."/>
            <person name="Sheng Y."/>
            <person name="Shibata Y."/>
            <person name="Shimada H."/>
            <person name="Shimada K."/>
            <person name="Silva D."/>
            <person name="Sinclair B."/>
            <person name="Sperling S."/>
            <person name="Stupka E."/>
            <person name="Sugiura K."/>
            <person name="Sultana R."/>
            <person name="Takenaka Y."/>
            <person name="Taki K."/>
            <person name="Tammoja K."/>
            <person name="Tan S.L."/>
            <person name="Tang S."/>
            <person name="Taylor M.S."/>
            <person name="Tegner J."/>
            <person name="Teichmann S.A."/>
            <person name="Ueda H.R."/>
            <person name="van Nimwegen E."/>
            <person name="Verardo R."/>
            <person name="Wei C.L."/>
            <person name="Yagi K."/>
            <person name="Yamanishi H."/>
            <person name="Zabarovsky E."/>
            <person name="Zhu S."/>
            <person name="Zimmer A."/>
            <person name="Hide W."/>
            <person name="Bult C."/>
            <person name="Grimmond S.M."/>
            <person name="Teasdale R.D."/>
            <person name="Liu E.T."/>
            <person name="Brusic V."/>
            <person name="Quackenbush J."/>
            <person name="Wahlestedt C."/>
            <person name="Mattick J.S."/>
            <person name="Hume D.A."/>
            <person name="Kai C."/>
            <person name="Sasaki D."/>
            <person name="Tomaru Y."/>
            <person name="Fukuda S."/>
            <person name="Kanamori-Katayama M."/>
            <person name="Suzuki M."/>
            <person name="Aoki J."/>
            <person name="Arakawa T."/>
            <person name="Iida J."/>
            <person name="Imamura K."/>
            <person name="Itoh M."/>
            <person name="Kato T."/>
            <person name="Kawaji H."/>
            <person name="Kawagashira N."/>
            <person name="Kawashima T."/>
            <person name="Kojima M."/>
            <person name="Kondo S."/>
            <person name="Konno H."/>
            <person name="Nakano K."/>
            <person name="Ninomiya N."/>
            <person name="Nishio T."/>
            <person name="Okada M."/>
            <person name="Plessy C."/>
            <person name="Shibata K."/>
            <person name="Shiraki T."/>
            <person name="Suzuki S."/>
            <person name="Tagami M."/>
            <person name="Waki K."/>
            <person name="Watahiki A."/>
            <person name="Okamura-Oho Y."/>
            <person name="Suzuki H."/>
            <person name="Kawai J."/>
            <person name="Hayashizaki Y."/>
        </authorList>
    </citation>
    <scope>NUCLEOTIDE SEQUENCE [LARGE SCALE MRNA] (ISOFORM 1)</scope>
    <source>
        <strain>C57BL/6J</strain>
        <tissue>Diencephalon</tissue>
        <tissue>Thymus</tissue>
    </source>
</reference>
<reference key="6">
    <citation type="journal article" date="2002" name="Proc. Natl. Acad. Sci. U.S.A.">
        <title>Expression of the suppressor of cytokine signaling-5 (SOCS5) negatively regulates IL-4-dependent STAT6 activation and Th2 differentiation.</title>
        <authorList>
            <person name="Seki Y."/>
            <person name="Hayashi K."/>
            <person name="Matsumoto A."/>
            <person name="Seki N."/>
            <person name="Tsukada J."/>
            <person name="Ransom J."/>
            <person name="Naka T."/>
            <person name="Kishimoto T."/>
            <person name="Yoshimura A."/>
            <person name="Kubo M."/>
        </authorList>
    </citation>
    <scope>INTERACTION WITH JAK1 AND SOCS5</scope>
</reference>
<reference key="7">
    <citation type="journal article" date="1993" name="J. Biol. Chem.">
        <title>Interleukin-4 (IL-4) induces protein tyrosine phosphorylation of the IL-4 receptor and association of phosphatidylinositol 3-kinase to the IL-4 receptor in a mouse T cell line, HT2.</title>
        <authorList>
            <person name="Izuhara K."/>
            <person name="Harada N."/>
        </authorList>
    </citation>
    <scope>PHOSPHORYLATION</scope>
    <scope>INTERACTION WITH PIK3C3</scope>
</reference>
<reference key="8">
    <citation type="journal article" date="1996" name="J. Immunol.">
        <title>Two distinct stimulus-dependent pathways lead to production of soluble murine interleukin-4 receptor.</title>
        <authorList>
            <person name="Blum H."/>
            <person name="Wolf M."/>
            <person name="Enssle K."/>
            <person name="Roellinghoff M."/>
            <person name="Gessner A."/>
        </authorList>
    </citation>
    <scope>PROTEOLYTIC PROCESSING</scope>
</reference>
<reference key="9">
    <citation type="journal article" date="2009" name="Immunity">
        <title>The phagosomal proteome in interferon-gamma-activated macrophages.</title>
        <authorList>
            <person name="Trost M."/>
            <person name="English L."/>
            <person name="Lemieux S."/>
            <person name="Courcelles M."/>
            <person name="Desjardins M."/>
            <person name="Thibault P."/>
        </authorList>
    </citation>
    <scope>PHOSPHORYLATION [LARGE SCALE ANALYSIS] AT SER-165</scope>
    <scope>IDENTIFICATION BY MASS SPECTROMETRY [LARGE SCALE ANALYSIS]</scope>
</reference>
<reference key="10">
    <citation type="journal article" date="2015" name="Proc. Natl. Acad. Sci. U.S.A.">
        <title>CD300f associates with IL-4 receptor alpha and amplifies IL-4-induced immune cell responses.</title>
        <authorList>
            <person name="Moshkovits I."/>
            <person name="Karo-Atar D."/>
            <person name="Itan M."/>
            <person name="Reichman H."/>
            <person name="Rozenberg P."/>
            <person name="Morgenstern-Ben-Baruch N."/>
            <person name="Shik D."/>
            <person name="Ejarque-Ortiz A."/>
            <person name="Hershko A.Y."/>
            <person name="Tian L."/>
            <person name="Coligan J.E."/>
            <person name="Sayos J."/>
            <person name="Munitz A."/>
        </authorList>
    </citation>
    <scope>TISSUE SPECIFICITY</scope>
    <scope>INTERACTION WITH CLM1</scope>
</reference>
<protein>
    <recommendedName>
        <fullName>Interleukin-4 receptor subunit alpha</fullName>
        <shortName>IL-4 receptor subunit alpha</shortName>
        <shortName>IL-4R subunit alpha</shortName>
        <shortName>IL-4R-alpha</shortName>
        <shortName>IL-4RA</shortName>
    </recommendedName>
    <cdAntigenName>CD124</cdAntigenName>
    <component>
        <recommendedName>
            <fullName>Soluble interleukin-4 receptor subunit alpha</fullName>
            <shortName>Soluble IL-4 receptor subunit alpha</shortName>
            <shortName>Soluble IL-4R-alpha</shortName>
            <shortName>sIL4Ralpha/prot</shortName>
        </recommendedName>
        <alternativeName>
            <fullName>IL-4-binding protein</fullName>
            <shortName>IL4-BP</shortName>
        </alternativeName>
    </component>
</protein>
<sequence length="810" mass="87627">MGRLCTKFLTSVGCLILLLVTGSGSIKVLGEPTCFSDYIRTSTCEWFLDSAVDCSSQLCLHYRLMFFEFSENLTCIPRNSASTVCVCHMEMNRPVQSDRYQMELWAEHRQLWQGSFSPSGNVKPLAPDNLTLHTNVSDEWLLTWNNLYPSNNLLYKDLISMVNISREDNPAEFIVYNVTYKEPRLSFPINILMSGVYYTARVRVRSQILTGTWSEWSPSITWYNHFQLPLIQRLPLGVTISCLCIPLFCLFCYFSITKIKKIWWDQIPTPARSPLVAIIIQDAQVPLWDKQTRSQESTKYPHWKTCLDKLLPCLLKHRVKKKTDFPKAAPTKSLQSPGKAGWCPMEVSRTVLWPENVSVSVVRCMELFEAPVQNVEEEEDEIVKEDLSMSPENSGGCGFQESQADIMARLTENLFSDLLEAENGGLGQSALAESCSPLPSGSGQASVSWACLPMGPSEEATCQVTEQPSHPGPLSGSPAQSAPTLACTQVPLVLADNPAYRSFSDCCSPAPNPGELAPEQQQADHLEEEEPPSPADPHSSGPPMQPVESWEQILHMSVLQHGAAAGSTPAPAGGYQEFVQAVKQGAAQDPGVPGVRPSGDPGYKAFSSLLSSNGIRGDTAAAGTDDGHGGYKPFQNPVPNQSPSSVPLFTFGLDTELSPSPLNSDPPKSPPECLGLELGLKGGDWVKAPPPADQVPKPFGDDLGFGIVYSSLTCHLCGHLKQHHSQEEGGQSPIVASPGCGCCYDDRSPSLGSLSGALESCPEGIPPEANLMSAPKTPSNLSGEGKGPGHSPVPSQTTEVPVGALGIAVS</sequence>
<organism>
    <name type="scientific">Mus musculus</name>
    <name type="common">Mouse</name>
    <dbReference type="NCBI Taxonomy" id="10090"/>
    <lineage>
        <taxon>Eukaryota</taxon>
        <taxon>Metazoa</taxon>
        <taxon>Chordata</taxon>
        <taxon>Craniata</taxon>
        <taxon>Vertebrata</taxon>
        <taxon>Euteleostomi</taxon>
        <taxon>Mammalia</taxon>
        <taxon>Eutheria</taxon>
        <taxon>Euarchontoglires</taxon>
        <taxon>Glires</taxon>
        <taxon>Rodentia</taxon>
        <taxon>Myomorpha</taxon>
        <taxon>Muroidea</taxon>
        <taxon>Muridae</taxon>
        <taxon>Murinae</taxon>
        <taxon>Mus</taxon>
        <taxon>Mus</taxon>
    </lineage>
</organism>
<evidence type="ECO:0000250" key="1"/>
<evidence type="ECO:0000250" key="2">
    <source>
        <dbReference type="UniProtKB" id="P24394"/>
    </source>
</evidence>
<evidence type="ECO:0000255" key="3"/>
<evidence type="ECO:0000255" key="4">
    <source>
        <dbReference type="PROSITE-ProRule" id="PRU00316"/>
    </source>
</evidence>
<evidence type="ECO:0000256" key="5">
    <source>
        <dbReference type="SAM" id="MobiDB-lite"/>
    </source>
</evidence>
<evidence type="ECO:0000269" key="6">
    <source>
    </source>
</evidence>
<evidence type="ECO:0000269" key="7">
    <source>
    </source>
</evidence>
<evidence type="ECO:0000269" key="8">
    <source>
    </source>
</evidence>
<evidence type="ECO:0000269" key="9">
    <source>
    </source>
</evidence>
<evidence type="ECO:0000269" key="10">
    <source>
    </source>
</evidence>
<evidence type="ECO:0000269" key="11">
    <source>
    </source>
</evidence>
<evidence type="ECO:0000303" key="12">
    <source>
    </source>
</evidence>
<evidence type="ECO:0000305" key="13"/>
<evidence type="ECO:0007744" key="14">
    <source>
    </source>
</evidence>
<accession>P16382</accession>
<accession>O54690</accession>
<accession>Q60583</accession>
<accession>Q8CBW5</accession>
<dbReference type="EMBL" id="M27959">
    <property type="protein sequence ID" value="AAA39299.1"/>
    <property type="molecule type" value="mRNA"/>
</dbReference>
<dbReference type="EMBL" id="M27960">
    <property type="protein sequence ID" value="AAA39300.1"/>
    <property type="molecule type" value="mRNA"/>
</dbReference>
<dbReference type="EMBL" id="M29854">
    <property type="protein sequence ID" value="AAA39297.1"/>
    <property type="molecule type" value="mRNA"/>
</dbReference>
<dbReference type="EMBL" id="M64879">
    <property type="protein sequence ID" value="AAB59727.1"/>
    <property type="molecule type" value="Genomic_DNA"/>
</dbReference>
<dbReference type="EMBL" id="M64870">
    <property type="protein sequence ID" value="AAB59727.1"/>
    <property type="status" value="JOINED"/>
    <property type="molecule type" value="Genomic_DNA"/>
</dbReference>
<dbReference type="EMBL" id="M64871">
    <property type="protein sequence ID" value="AAB59727.1"/>
    <property type="status" value="JOINED"/>
    <property type="molecule type" value="Genomic_DNA"/>
</dbReference>
<dbReference type="EMBL" id="M64872">
    <property type="protein sequence ID" value="AAB59727.1"/>
    <property type="status" value="JOINED"/>
    <property type="molecule type" value="Genomic_DNA"/>
</dbReference>
<dbReference type="EMBL" id="M64873">
    <property type="protein sequence ID" value="AAB59727.1"/>
    <property type="status" value="JOINED"/>
    <property type="molecule type" value="Genomic_DNA"/>
</dbReference>
<dbReference type="EMBL" id="M64874">
    <property type="protein sequence ID" value="AAB59727.1"/>
    <property type="status" value="JOINED"/>
    <property type="molecule type" value="Genomic_DNA"/>
</dbReference>
<dbReference type="EMBL" id="M64876">
    <property type="protein sequence ID" value="AAB59727.1"/>
    <property type="status" value="JOINED"/>
    <property type="molecule type" value="Genomic_DNA"/>
</dbReference>
<dbReference type="EMBL" id="M64877">
    <property type="protein sequence ID" value="AAB59727.1"/>
    <property type="status" value="JOINED"/>
    <property type="molecule type" value="Genomic_DNA"/>
</dbReference>
<dbReference type="EMBL" id="M64878">
    <property type="protein sequence ID" value="AAB59727.1"/>
    <property type="status" value="JOINED"/>
    <property type="molecule type" value="Genomic_DNA"/>
</dbReference>
<dbReference type="EMBL" id="AF000304">
    <property type="protein sequence ID" value="AAB87750.1"/>
    <property type="molecule type" value="mRNA"/>
</dbReference>
<dbReference type="EMBL" id="AK034466">
    <property type="protein sequence ID" value="BAC28718.1"/>
    <property type="molecule type" value="mRNA"/>
</dbReference>
<dbReference type="EMBL" id="AK088086">
    <property type="protein sequence ID" value="BAC40137.1"/>
    <property type="molecule type" value="mRNA"/>
</dbReference>
<dbReference type="CCDS" id="CCDS40121.1">
    <molecule id="P16382-1"/>
</dbReference>
<dbReference type="PIR" id="A33380">
    <property type="entry name" value="A33380"/>
</dbReference>
<dbReference type="RefSeq" id="NP_001008700.1">
    <molecule id="P16382-1"/>
    <property type="nucleotide sequence ID" value="NM_001008700.3"/>
</dbReference>
<dbReference type="SMR" id="P16382"/>
<dbReference type="BioGRID" id="200638">
    <property type="interactions" value="3"/>
</dbReference>
<dbReference type="DIP" id="DIP-1168N"/>
<dbReference type="FunCoup" id="P16382">
    <property type="interactions" value="713"/>
</dbReference>
<dbReference type="STRING" id="10090.ENSMUSP00000033004"/>
<dbReference type="GlyCosmos" id="P16382">
    <property type="glycosylation" value="4 sites, No reported glycans"/>
</dbReference>
<dbReference type="GlyGen" id="P16382">
    <property type="glycosylation" value="5 sites, 1 N-linked glycan (1 site)"/>
</dbReference>
<dbReference type="iPTMnet" id="P16382"/>
<dbReference type="PhosphoSitePlus" id="P16382"/>
<dbReference type="jPOST" id="P16382"/>
<dbReference type="PaxDb" id="10090-ENSMUSP00000033004"/>
<dbReference type="ProteomicsDB" id="267324">
    <molecule id="P16382-1"/>
</dbReference>
<dbReference type="ProteomicsDB" id="267325">
    <molecule id="P16382-2"/>
</dbReference>
<dbReference type="ProteomicsDB" id="267326">
    <molecule id="P16382-3"/>
</dbReference>
<dbReference type="Antibodypedia" id="3843">
    <property type="antibodies" value="771 antibodies from 41 providers"/>
</dbReference>
<dbReference type="DNASU" id="16190"/>
<dbReference type="Ensembl" id="ENSMUST00000033004.8">
    <molecule id="P16382-1"/>
    <property type="protein sequence ID" value="ENSMUSP00000033004.7"/>
    <property type="gene ID" value="ENSMUSG00000030748.10"/>
</dbReference>
<dbReference type="Ensembl" id="ENSMUST00000206846.2">
    <molecule id="P16382-2"/>
    <property type="protein sequence ID" value="ENSMUSP00000145824.2"/>
    <property type="gene ID" value="ENSMUSG00000030748.10"/>
</dbReference>
<dbReference type="GeneID" id="16190"/>
<dbReference type="KEGG" id="mmu:16190"/>
<dbReference type="UCSC" id="uc009jqc.1">
    <molecule id="P16382-1"/>
    <property type="organism name" value="mouse"/>
</dbReference>
<dbReference type="AGR" id="MGI:105367"/>
<dbReference type="CTD" id="16190"/>
<dbReference type="MGI" id="MGI:105367">
    <property type="gene designation" value="Il4ra"/>
</dbReference>
<dbReference type="VEuPathDB" id="HostDB:ENSMUSG00000030748"/>
<dbReference type="eggNOG" id="ENOG502S3Y8">
    <property type="taxonomic scope" value="Eukaryota"/>
</dbReference>
<dbReference type="GeneTree" id="ENSGT00510000049182"/>
<dbReference type="HOGENOM" id="CLU_020561_0_0_1"/>
<dbReference type="InParanoid" id="P16382"/>
<dbReference type="OMA" id="AVCVCHM"/>
<dbReference type="OrthoDB" id="8962741at2759"/>
<dbReference type="PhylomeDB" id="P16382"/>
<dbReference type="TreeFam" id="TF337996"/>
<dbReference type="Reactome" id="R-MMU-6785807">
    <property type="pathway name" value="Interleukin-4 and Interleukin-13 signaling"/>
</dbReference>
<dbReference type="BioGRID-ORCS" id="16190">
    <property type="hits" value="4 hits in 81 CRISPR screens"/>
</dbReference>
<dbReference type="PRO" id="PR:P16382"/>
<dbReference type="Proteomes" id="UP000000589">
    <property type="component" value="Chromosome 7"/>
</dbReference>
<dbReference type="RNAct" id="P16382">
    <property type="molecule type" value="protein"/>
</dbReference>
<dbReference type="Bgee" id="ENSMUSG00000030748">
    <property type="expression patterns" value="Expressed in lumbar dorsal root ganglion and 168 other cell types or tissues"/>
</dbReference>
<dbReference type="ExpressionAtlas" id="P16382">
    <property type="expression patterns" value="baseline and differential"/>
</dbReference>
<dbReference type="GO" id="GO:0034451">
    <property type="term" value="C:centriolar satellite"/>
    <property type="evidence" value="ECO:0007669"/>
    <property type="project" value="Ensembl"/>
</dbReference>
<dbReference type="GO" id="GO:0005576">
    <property type="term" value="C:extracellular region"/>
    <property type="evidence" value="ECO:0007669"/>
    <property type="project" value="UniProtKB-SubCell"/>
</dbReference>
<dbReference type="GO" id="GO:0005654">
    <property type="term" value="C:nucleoplasm"/>
    <property type="evidence" value="ECO:0007669"/>
    <property type="project" value="Ensembl"/>
</dbReference>
<dbReference type="GO" id="GO:0005886">
    <property type="term" value="C:plasma membrane"/>
    <property type="evidence" value="ECO:0007669"/>
    <property type="project" value="UniProtKB-SubCell"/>
</dbReference>
<dbReference type="GO" id="GO:0043235">
    <property type="term" value="C:receptor complex"/>
    <property type="evidence" value="ECO:0000266"/>
    <property type="project" value="MGI"/>
</dbReference>
<dbReference type="GO" id="GO:0004913">
    <property type="term" value="F:interleukin-4 receptor activity"/>
    <property type="evidence" value="ECO:0007669"/>
    <property type="project" value="Ensembl"/>
</dbReference>
<dbReference type="GO" id="GO:0042832">
    <property type="term" value="P:defense response to protozoan"/>
    <property type="evidence" value="ECO:0000315"/>
    <property type="project" value="MGI"/>
</dbReference>
<dbReference type="GO" id="GO:0016064">
    <property type="term" value="P:immunoglobulin mediated immune response"/>
    <property type="evidence" value="ECO:0000315"/>
    <property type="project" value="MGI"/>
</dbReference>
<dbReference type="GO" id="GO:0045626">
    <property type="term" value="P:negative regulation of T-helper 1 cell differentiation"/>
    <property type="evidence" value="ECO:0000316"/>
    <property type="project" value="MGI"/>
</dbReference>
<dbReference type="GO" id="GO:0032722">
    <property type="term" value="P:positive regulation of chemokine production"/>
    <property type="evidence" value="ECO:0000315"/>
    <property type="project" value="BHF-UCL"/>
</dbReference>
<dbReference type="GO" id="GO:0120162">
    <property type="term" value="P:positive regulation of cold-induced thermogenesis"/>
    <property type="evidence" value="ECO:0000315"/>
    <property type="project" value="YuBioLab"/>
</dbReference>
<dbReference type="GO" id="GO:0002639">
    <property type="term" value="P:positive regulation of immunoglobulin production"/>
    <property type="evidence" value="ECO:0000315"/>
    <property type="project" value="MGI"/>
</dbReference>
<dbReference type="GO" id="GO:0043032">
    <property type="term" value="P:positive regulation of macrophage activation"/>
    <property type="evidence" value="ECO:0000315"/>
    <property type="project" value="BHF-UCL"/>
</dbReference>
<dbReference type="GO" id="GO:0043306">
    <property type="term" value="P:positive regulation of mast cell degranulation"/>
    <property type="evidence" value="ECO:0000315"/>
    <property type="project" value="MGI"/>
</dbReference>
<dbReference type="GO" id="GO:1901741">
    <property type="term" value="P:positive regulation of myoblast fusion"/>
    <property type="evidence" value="ECO:0000315"/>
    <property type="project" value="MGI"/>
</dbReference>
<dbReference type="GO" id="GO:0045630">
    <property type="term" value="P:positive regulation of T-helper 2 cell differentiation"/>
    <property type="evidence" value="ECO:0000316"/>
    <property type="project" value="MGI"/>
</dbReference>
<dbReference type="GO" id="GO:0002532">
    <property type="term" value="P:production of molecular mediator involved in inflammatory response"/>
    <property type="evidence" value="ECO:0007669"/>
    <property type="project" value="InterPro"/>
</dbReference>
<dbReference type="GO" id="GO:0045063">
    <property type="term" value="P:T-helper 1 cell differentiation"/>
    <property type="evidence" value="ECO:0000316"/>
    <property type="project" value="MGI"/>
</dbReference>
<dbReference type="GO" id="GO:0045064">
    <property type="term" value="P:T-helper 2 cell differentiation"/>
    <property type="evidence" value="ECO:0000316"/>
    <property type="project" value="MGI"/>
</dbReference>
<dbReference type="CDD" id="cd00063">
    <property type="entry name" value="FN3"/>
    <property type="match status" value="1"/>
</dbReference>
<dbReference type="Gene3D" id="2.60.40.10">
    <property type="entry name" value="Immunoglobulins"/>
    <property type="match status" value="2"/>
</dbReference>
<dbReference type="InterPro" id="IPR003961">
    <property type="entry name" value="FN3_dom"/>
</dbReference>
<dbReference type="InterPro" id="IPR036116">
    <property type="entry name" value="FN3_sf"/>
</dbReference>
<dbReference type="InterPro" id="IPR003531">
    <property type="entry name" value="Hempt_rcpt_S_F1_CS"/>
</dbReference>
<dbReference type="InterPro" id="IPR013783">
    <property type="entry name" value="Ig-like_fold"/>
</dbReference>
<dbReference type="InterPro" id="IPR015319">
    <property type="entry name" value="IL-4_rcpt-alpha_N"/>
</dbReference>
<dbReference type="PANTHER" id="PTHR23037">
    <property type="entry name" value="CYTOKINE RECEPTOR"/>
    <property type="match status" value="1"/>
</dbReference>
<dbReference type="PANTHER" id="PTHR23037:SF32">
    <property type="entry name" value="INTERLEUKIN-4 RECEPTOR SUBUNIT ALPHA"/>
    <property type="match status" value="1"/>
</dbReference>
<dbReference type="Pfam" id="PF09238">
    <property type="entry name" value="IL4Ra_N"/>
    <property type="match status" value="1"/>
</dbReference>
<dbReference type="SUPFAM" id="SSF49265">
    <property type="entry name" value="Fibronectin type III"/>
    <property type="match status" value="2"/>
</dbReference>
<dbReference type="PROSITE" id="PS50853">
    <property type="entry name" value="FN3"/>
    <property type="match status" value="1"/>
</dbReference>
<dbReference type="PROSITE" id="PS01355">
    <property type="entry name" value="HEMATOPO_REC_S_F1"/>
    <property type="match status" value="1"/>
</dbReference>
<feature type="signal peptide" evidence="8">
    <location>
        <begin position="1"/>
        <end position="25"/>
    </location>
</feature>
<feature type="chain" id="PRO_0000010889" description="Interleukin-4 receptor subunit alpha">
    <location>
        <begin position="26"/>
        <end position="810"/>
    </location>
</feature>
<feature type="chain" id="PRO_0000010890" description="Soluble interleukin-4 receptor subunit alpha">
    <location>
        <begin position="26"/>
        <end status="unknown"/>
    </location>
</feature>
<feature type="topological domain" description="Extracellular" evidence="3">
    <location>
        <begin position="26"/>
        <end position="233"/>
    </location>
</feature>
<feature type="transmembrane region" description="Helical" evidence="3">
    <location>
        <begin position="234"/>
        <end position="257"/>
    </location>
</feature>
<feature type="topological domain" description="Cytoplasmic" evidence="3">
    <location>
        <begin position="258"/>
        <end position="810"/>
    </location>
</feature>
<feature type="domain" description="Fibronectin type-III" evidence="4">
    <location>
        <begin position="126"/>
        <end position="224"/>
    </location>
</feature>
<feature type="region of interest" description="Required for IRS1 activation and IL4-induced cell growth" evidence="1">
    <location>
        <begin position="441"/>
        <end position="557"/>
    </location>
</feature>
<feature type="region of interest" description="Disordered" evidence="5">
    <location>
        <begin position="460"/>
        <end position="482"/>
    </location>
</feature>
<feature type="region of interest" description="Disordered" evidence="5">
    <location>
        <begin position="510"/>
        <end position="546"/>
    </location>
</feature>
<feature type="region of interest" description="Required for IL4-induced gene expression" evidence="1">
    <location>
        <begin position="557"/>
        <end position="653"/>
    </location>
</feature>
<feature type="region of interest" description="Disordered" evidence="5">
    <location>
        <begin position="586"/>
        <end position="672"/>
    </location>
</feature>
<feature type="region of interest" description="Disordered" evidence="5">
    <location>
        <begin position="766"/>
        <end position="810"/>
    </location>
</feature>
<feature type="short sequence motif" description="WSXWS motif">
    <location>
        <begin position="213"/>
        <end position="217"/>
    </location>
</feature>
<feature type="short sequence motif" description="Box 1 motif">
    <location>
        <begin position="263"/>
        <end position="271"/>
    </location>
</feature>
<feature type="short sequence motif" description="ITIM motif">
    <location>
        <begin position="707"/>
        <end position="712"/>
    </location>
</feature>
<feature type="compositionally biased region" description="Low complexity" evidence="5">
    <location>
        <begin position="635"/>
        <end position="647"/>
    </location>
</feature>
<feature type="modified residue" description="Phosphoserine" evidence="14">
    <location>
        <position position="165"/>
    </location>
</feature>
<feature type="modified residue" description="Phosphotyrosine" evidence="2">
    <location>
        <position position="500"/>
    </location>
</feature>
<feature type="modified residue" description="Phosphotyrosine" evidence="2">
    <location>
        <position position="575"/>
    </location>
</feature>
<feature type="modified residue" description="Phosphotyrosine" evidence="2">
    <location>
        <position position="603"/>
    </location>
</feature>
<feature type="modified residue" description="Phosphotyrosine" evidence="2">
    <location>
        <position position="631"/>
    </location>
</feature>
<feature type="glycosylation site" description="N-linked (GlcNAc...) asparagine" evidence="3">
    <location>
        <position position="72"/>
    </location>
</feature>
<feature type="glycosylation site" description="N-linked (GlcNAc...) asparagine" evidence="3">
    <location>
        <position position="129"/>
    </location>
</feature>
<feature type="glycosylation site" description="N-linked (GlcNAc...) asparagine" evidence="3">
    <location>
        <position position="135"/>
    </location>
</feature>
<feature type="glycosylation site" description="N-linked (GlcNAc...) asparagine">
    <location>
        <position position="163"/>
    </location>
</feature>
<feature type="disulfide bond" evidence="1">
    <location>
        <begin position="34"/>
        <end position="44"/>
    </location>
</feature>
<feature type="disulfide bond" evidence="1">
    <location>
        <begin position="75"/>
        <end position="87"/>
    </location>
</feature>
<feature type="splice variant" id="VSP_001675" description="In isoform 2." evidence="12">
    <original>HFQLPL</original>
    <variation>PSNENL</variation>
    <location>
        <begin position="225"/>
        <end position="230"/>
    </location>
</feature>
<feature type="splice variant" id="VSP_001676" description="In isoform 2." evidence="12">
    <location>
        <begin position="231"/>
        <end position="810"/>
    </location>
</feature>
<feature type="splice variant" id="VSP_001677" description="In isoform 3." evidence="12">
    <location>
        <begin position="258"/>
        <end position="810"/>
    </location>
</feature>
<feature type="sequence variant" description="In strain: BALB/c, AKR/J and SJL/J.">
    <original>C</original>
    <variation>R</variation>
    <location>
        <position position="59"/>
    </location>
</feature>
<feature type="sequence variant" description="In strain: BALB/c, AKR/J and SJL/J; reduced IL4-neutralizing capacity of soluble form." evidence="11">
    <original>T</original>
    <variation>I</variation>
    <location>
        <position position="74"/>
    </location>
</feature>
<feature type="sequence variant" description="In strain: BALB/c, AKR/J and SJL/J.">
    <original>M</original>
    <variation>T</variation>
    <location>
        <position position="193"/>
    </location>
</feature>
<feature type="sequence variant" description="In strain: BALB/c, AKR/J and SJL/J.">
    <original>L</original>
    <variation>P</variation>
    <location>
        <position position="334"/>
    </location>
</feature>
<feature type="sequence variant" description="In strain: BALB/c, AKR/J and SJL/J.">
    <original>N</original>
    <variation>S</variation>
    <location>
        <position position="374"/>
    </location>
</feature>
<feature type="sequence variant" description="In strain: BALB/c, AKR/J and SJL/J.">
    <original>I</original>
    <variation>M</variation>
    <location>
        <position position="382"/>
    </location>
</feature>
<feature type="sequence variant" description="In strain: BALB/c, AKR/J and SJL/J.">
    <original>G</original>
    <variation>D</variation>
    <location>
        <position position="472"/>
    </location>
</feature>
<feature type="sequence variant" description="In strain: BALB/c, AKR/J and SJL/J.">
    <original>D</original>
    <variation>G</variation>
    <location>
        <position position="626"/>
    </location>
</feature>
<feature type="sequence conflict" description="In Ref. 5; BAC28718." evidence="13" ref="5">
    <original>S</original>
    <variation>C</variation>
    <location>
        <position position="436"/>
    </location>
</feature>
<keyword id="KW-0025">Alternative splicing</keyword>
<keyword id="KW-1003">Cell membrane</keyword>
<keyword id="KW-0903">Direct protein sequencing</keyword>
<keyword id="KW-1015">Disulfide bond</keyword>
<keyword id="KW-0325">Glycoprotein</keyword>
<keyword id="KW-0391">Immunity</keyword>
<keyword id="KW-0472">Membrane</keyword>
<keyword id="KW-0597">Phosphoprotein</keyword>
<keyword id="KW-0675">Receptor</keyword>
<keyword id="KW-1185">Reference proteome</keyword>
<keyword id="KW-0964">Secreted</keyword>
<keyword id="KW-0732">Signal</keyword>
<keyword id="KW-0812">Transmembrane</keyword>
<keyword id="KW-1133">Transmembrane helix</keyword>
<comment type="function">
    <text>Receptor for both interleukin 4 and interleukin 13. Couples to the JAK1/2/3-STAT6 pathway. The IL4 response is involved in promoting Th2 differentiation. The IL4/IL13 responses are involved in regulating IgE production and, chemokine and mucus production at sites of allergic inflammation. In certain cell types, can signal through activation of insulin receptor substrates, IRS1/IRS2.</text>
</comment>
<comment type="subunit">
    <text evidence="2 6 7 9">The functional IL4 receptor is formed by initial binding of IL4 to IL4R. Subsequent recruitment to the complex of the common gamma chain, in immune cells, creates a type I receptor and, in non-immune cells, of IL13RA1 forms a type II receptor. IL4R can also interact with the IL13/IL13RA1 complex to form a similar type II receptor. Interacts with the SH2-containing phosphatases, PTPN6/SHIP1, PTPN11/SHIP2 and INPP5D/SHIP. Interacts with JAK3 (By similarity). Interacts with PIK3C3 (PubMed:8390454). Interacts with JAK1 through a Box 1-containing region; inhibited by SOCS5 (PubMed:12242343). Interacts with SOCS5; inhibits IL4 signaling (PubMed:12242343). Interacts with CLM1 (PubMed:26124135). Interacts with IL13RA2 (By similarity).</text>
</comment>
<comment type="subcellular location">
    <subcellularLocation>
        <location>Cell membrane</location>
        <topology>Single-pass type I membrane protein</topology>
    </subcellularLocation>
</comment>
<comment type="subcellular location">
    <molecule>Isoform 2</molecule>
    <subcellularLocation>
        <location>Secreted</location>
    </subcellularLocation>
</comment>
<comment type="alternative products">
    <event type="alternative splicing"/>
    <isoform>
        <id>P16382-1</id>
        <name>1</name>
        <name>Membrane</name>
        <sequence type="displayed"/>
    </isoform>
    <isoform>
        <id>P16382-2</id>
        <name>2</name>
        <name>Secreted</name>
        <sequence type="described" ref="VSP_001675 VSP_001676"/>
    </isoform>
    <isoform>
        <id>P16382-3</id>
        <name>3</name>
        <sequence type="described" ref="VSP_001677"/>
    </isoform>
</comment>
<comment type="tissue specificity">
    <text>Expressed in both Th1 and Th2 cells.</text>
</comment>
<comment type="domain">
    <text evidence="1">The extracellular domain represents the IL4 binding protein (IL4BP).</text>
</comment>
<comment type="domain">
    <text>The WSXWS motif appears to be necessary for proper protein folding and thereby efficient intracellular transport and cell-surface receptor binding.</text>
</comment>
<comment type="domain">
    <text>The box 1 motif is required for JAK interaction and/or activation.</text>
</comment>
<comment type="domain">
    <text>Contains 1 copy of a cytoplasmic motif that is referred to as the immunoreceptor tyrosine-based inhibitor motif (ITIM). This motif is involved in modulation of cellular responses. The phosphorylated ITIM motif can bind the SH2 domain of several SH2-containing phosphatases.</text>
</comment>
<comment type="PTM">
    <text evidence="2">On IL4 binding, phosphorylated on C-terminal tyrosine residues.</text>
</comment>
<comment type="PTM">
    <text evidence="10">Soluble IL4R can also be produced by proteolytic cleavage at the cell surface (shedding).</text>
</comment>
<comment type="miscellaneous">
    <text>The sequences from strains C3H, CBA, DBA/2 and FVB/N are all identical to the one displayed.</text>
</comment>
<comment type="miscellaneous">
    <molecule>Isoform 1</molecule>
    <text>Binds IL-4.</text>
</comment>
<comment type="miscellaneous">
    <molecule>Isoform 2</molecule>
    <text evidence="13">Binds IL-4.</text>
</comment>
<comment type="miscellaneous">
    <molecule>Isoform 3</molecule>
    <text evidence="13">Lacks the cytoplasmic domain. Binds IL4.</text>
</comment>
<comment type="similarity">
    <text evidence="13">Belongs to the type I cytokine receptor family. Type 4 subfamily.</text>
</comment>
<gene>
    <name type="primary">Il4r</name>
    <name type="synonym">Il4ra</name>
</gene>
<name>IL4RA_MOUSE</name>